<gene>
    <name type="primary">MIT1</name>
    <name type="ordered locus">YEL007W</name>
</gene>
<dbReference type="EMBL" id="U18530">
    <property type="protein sequence ID" value="AAB64484.1"/>
    <property type="molecule type" value="Genomic_DNA"/>
</dbReference>
<dbReference type="EMBL" id="BK006939">
    <property type="protein sequence ID" value="DAA07644.1"/>
    <property type="molecule type" value="Genomic_DNA"/>
</dbReference>
<dbReference type="PIR" id="S50452">
    <property type="entry name" value="S50452"/>
</dbReference>
<dbReference type="RefSeq" id="NP_010909.1">
    <property type="nucleotide sequence ID" value="NM_001178822.1"/>
</dbReference>
<dbReference type="SMR" id="P40002"/>
<dbReference type="BioGRID" id="36724">
    <property type="interactions" value="157"/>
</dbReference>
<dbReference type="FunCoup" id="P40002">
    <property type="interactions" value="181"/>
</dbReference>
<dbReference type="IntAct" id="P40002">
    <property type="interactions" value="6"/>
</dbReference>
<dbReference type="STRING" id="4932.YEL007W"/>
<dbReference type="GlyGen" id="P40002">
    <property type="glycosylation" value="2 sites, 1 O-linked glycan (1 site)"/>
</dbReference>
<dbReference type="iPTMnet" id="P40002"/>
<dbReference type="PaxDb" id="4932-YEL007W"/>
<dbReference type="PeptideAtlas" id="P40002"/>
<dbReference type="EnsemblFungi" id="YEL007W_mRNA">
    <property type="protein sequence ID" value="YEL007W"/>
    <property type="gene ID" value="YEL007W"/>
</dbReference>
<dbReference type="GeneID" id="856711"/>
<dbReference type="KEGG" id="sce:YEL007W"/>
<dbReference type="AGR" id="SGD:S000000733"/>
<dbReference type="SGD" id="S000000733">
    <property type="gene designation" value="MIT1"/>
</dbReference>
<dbReference type="VEuPathDB" id="FungiDB:YEL007W"/>
<dbReference type="eggNOG" id="KOG4476">
    <property type="taxonomic scope" value="Eukaryota"/>
</dbReference>
<dbReference type="GeneTree" id="ENSGT00940000176779"/>
<dbReference type="HOGENOM" id="CLU_404467_0_0_1"/>
<dbReference type="InParanoid" id="P40002"/>
<dbReference type="OrthoDB" id="5572844at2759"/>
<dbReference type="BioCyc" id="YEAST:G3O-30136-MONOMER"/>
<dbReference type="BioGRID-ORCS" id="856711">
    <property type="hits" value="1 hit in 10 CRISPR screens"/>
</dbReference>
<dbReference type="CD-CODE" id="E03F929F">
    <property type="entry name" value="Stress granule"/>
</dbReference>
<dbReference type="PRO" id="PR:P40002"/>
<dbReference type="Proteomes" id="UP000002311">
    <property type="component" value="Chromosome V"/>
</dbReference>
<dbReference type="RNAct" id="P40002">
    <property type="molecule type" value="protein"/>
</dbReference>
<dbReference type="GO" id="GO:0005737">
    <property type="term" value="C:cytoplasm"/>
    <property type="evidence" value="ECO:0007005"/>
    <property type="project" value="SGD"/>
</dbReference>
<dbReference type="GO" id="GO:0005634">
    <property type="term" value="C:nucleus"/>
    <property type="evidence" value="ECO:0007005"/>
    <property type="project" value="SGD"/>
</dbReference>
<dbReference type="GO" id="GO:0003677">
    <property type="term" value="F:DNA binding"/>
    <property type="evidence" value="ECO:0000318"/>
    <property type="project" value="GO_Central"/>
</dbReference>
<dbReference type="InterPro" id="IPR018608">
    <property type="entry name" value="Gti1/Pac2"/>
</dbReference>
<dbReference type="PANTHER" id="PTHR28027">
    <property type="entry name" value="TRANSCRIPTIONAL REGULATOR MIT1"/>
    <property type="match status" value="1"/>
</dbReference>
<dbReference type="PANTHER" id="PTHR28027:SF2">
    <property type="entry name" value="TRANSCRIPTIONAL REGULATOR MIT1"/>
    <property type="match status" value="1"/>
</dbReference>
<dbReference type="Pfam" id="PF09729">
    <property type="entry name" value="Gti1_Pac2"/>
    <property type="match status" value="1"/>
</dbReference>
<organism>
    <name type="scientific">Saccharomyces cerevisiae (strain ATCC 204508 / S288c)</name>
    <name type="common">Baker's yeast</name>
    <dbReference type="NCBI Taxonomy" id="559292"/>
    <lineage>
        <taxon>Eukaryota</taxon>
        <taxon>Fungi</taxon>
        <taxon>Dikarya</taxon>
        <taxon>Ascomycota</taxon>
        <taxon>Saccharomycotina</taxon>
        <taxon>Saccharomycetes</taxon>
        <taxon>Saccharomycetales</taxon>
        <taxon>Saccharomycetaceae</taxon>
        <taxon>Saccharomyces</taxon>
    </lineage>
</organism>
<accession>P40002</accession>
<accession>D3DLP0</accession>
<evidence type="ECO:0000256" key="1">
    <source>
        <dbReference type="SAM" id="MobiDB-lite"/>
    </source>
</evidence>
<evidence type="ECO:0000269" key="2">
    <source>
    </source>
</evidence>
<evidence type="ECO:0000269" key="3">
    <source>
    </source>
</evidence>
<evidence type="ECO:0000269" key="4">
    <source>
    </source>
</evidence>
<evidence type="ECO:0000305" key="5"/>
<evidence type="ECO:0007744" key="6">
    <source>
    </source>
</evidence>
<sequence>MDIEPTFKGYIEDEDDALLILQATLDGKLKHIPRRPYEIERPYLIVSGSIFVFIEEISGIKRWTDGVSWSPSRISGKFLIYKELDKENAGSNANATSSGSTDSAVITDGTSGARNNPSSSKIKLPPLKNHQFDLPPTMGHSSFESEQDTSISPSNRSNLPLKYTGLVKKTISVKLKRPPFNSIENLHIVSYYSVKDIKQNCLVTPKASPFLKDVRPSQELIVAMGNTTLGNVKNNSTTTGNGPNNINNKSNSSTPLNTVISTNNNSANINAAGSNQFTSANKNYYYKNDESSGYPITQFAPALPSTTLMYTANPPYITQSPDNTNATGMNTHVNNNNNNSNNSSNSNNSNNNNNNNNNNNNNNNNNINNINNVNTNAGNGNNPNRFHNASFAYNTTGDFINPQQQGQISYPFYYTTIPINNPNYYTTQPPNPVTNASTNENQGYSTSSTQHPYYGHPTESQSASAAAGATGTPGTAENVLPVSSMQPLLHQANNNSASSATSTAPYPVYSMNVNVPYYNSSASAYKRAQENTTSNTNAEPSGATSTNSGTMLSNPAYANSQYTPSQVYYQGFPQYAMASAQNPSMYQHQHQHPLPTVYPIATPQQNIMSSGHTLSTIGSDPQHHHYQQEPNDHKNFAMGHANNNILNITNNDTMNNLNTNTSTTTQ</sequence>
<keyword id="KW-0963">Cytoplasm</keyword>
<keyword id="KW-0539">Nucleus</keyword>
<keyword id="KW-0597">Phosphoprotein</keyword>
<keyword id="KW-1185">Reference proteome</keyword>
<reference key="1">
    <citation type="journal article" date="1997" name="Nature">
        <title>The nucleotide sequence of Saccharomyces cerevisiae chromosome V.</title>
        <authorList>
            <person name="Dietrich F.S."/>
            <person name="Mulligan J.T."/>
            <person name="Hennessy K.M."/>
            <person name="Yelton M.A."/>
            <person name="Allen E."/>
            <person name="Araujo R."/>
            <person name="Aviles E."/>
            <person name="Berno A."/>
            <person name="Brennan T."/>
            <person name="Carpenter J."/>
            <person name="Chen E."/>
            <person name="Cherry J.M."/>
            <person name="Chung E."/>
            <person name="Duncan M."/>
            <person name="Guzman E."/>
            <person name="Hartzell G."/>
            <person name="Hunicke-Smith S."/>
            <person name="Hyman R.W."/>
            <person name="Kayser A."/>
            <person name="Komp C."/>
            <person name="Lashkari D."/>
            <person name="Lew H."/>
            <person name="Lin D."/>
            <person name="Mosedale D."/>
            <person name="Nakahara K."/>
            <person name="Namath A."/>
            <person name="Norgren R."/>
            <person name="Oefner P."/>
            <person name="Oh C."/>
            <person name="Petel F.X."/>
            <person name="Roberts D."/>
            <person name="Sehl P."/>
            <person name="Schramm S."/>
            <person name="Shogren T."/>
            <person name="Smith V."/>
            <person name="Taylor P."/>
            <person name="Wei Y."/>
            <person name="Botstein D."/>
            <person name="Davis R.W."/>
        </authorList>
    </citation>
    <scope>NUCLEOTIDE SEQUENCE [LARGE SCALE GENOMIC DNA]</scope>
    <source>
        <strain>ATCC 204508 / S288c</strain>
    </source>
</reference>
<reference key="2">
    <citation type="journal article" date="2014" name="G3 (Bethesda)">
        <title>The reference genome sequence of Saccharomyces cerevisiae: Then and now.</title>
        <authorList>
            <person name="Engel S.R."/>
            <person name="Dietrich F.S."/>
            <person name="Fisk D.G."/>
            <person name="Binkley G."/>
            <person name="Balakrishnan R."/>
            <person name="Costanzo M.C."/>
            <person name="Dwight S.S."/>
            <person name="Hitz B.C."/>
            <person name="Karra K."/>
            <person name="Nash R.S."/>
            <person name="Weng S."/>
            <person name="Wong E.D."/>
            <person name="Lloyd P."/>
            <person name="Skrzypek M.S."/>
            <person name="Miyasato S.R."/>
            <person name="Simison M."/>
            <person name="Cherry J.M."/>
        </authorList>
    </citation>
    <scope>GENOME REANNOTATION</scope>
    <source>
        <strain>ATCC 204508 / S288c</strain>
    </source>
</reference>
<reference key="3">
    <citation type="journal article" date="2003" name="Nature">
        <title>Global analysis of protein localization in budding yeast.</title>
        <authorList>
            <person name="Huh W.-K."/>
            <person name="Falvo J.V."/>
            <person name="Gerke L.C."/>
            <person name="Carroll A.S."/>
            <person name="Howson R.W."/>
            <person name="Weissman J.S."/>
            <person name="O'Shea E.K."/>
        </authorList>
    </citation>
    <scope>SUBCELLULAR LOCATION [LARGE SCALE ANALYSIS]</scope>
</reference>
<reference key="4">
    <citation type="journal article" date="2003" name="Nature">
        <title>Global analysis of protein expression in yeast.</title>
        <authorList>
            <person name="Ghaemmaghami S."/>
            <person name="Huh W.-K."/>
            <person name="Bower K."/>
            <person name="Howson R.W."/>
            <person name="Belle A."/>
            <person name="Dephoure N."/>
            <person name="O'Shea E.K."/>
            <person name="Weissman J.S."/>
        </authorList>
    </citation>
    <scope>LEVEL OF PROTEIN EXPRESSION [LARGE SCALE ANALYSIS]</scope>
</reference>
<reference key="5">
    <citation type="journal article" date="2008" name="Mol. Cell. Proteomics">
        <title>A multidimensional chromatography technology for in-depth phosphoproteome analysis.</title>
        <authorList>
            <person name="Albuquerque C.P."/>
            <person name="Smolka M.B."/>
            <person name="Payne S.H."/>
            <person name="Bafna V."/>
            <person name="Eng J."/>
            <person name="Zhou H."/>
        </authorList>
    </citation>
    <scope>IDENTIFICATION BY MASS SPECTROMETRY [LARGE SCALE ANALYSIS]</scope>
</reference>
<reference key="6">
    <citation type="journal article" date="2009" name="Science">
        <title>Global analysis of Cdk1 substrate phosphorylation sites provides insights into evolution.</title>
        <authorList>
            <person name="Holt L.J."/>
            <person name="Tuch B.B."/>
            <person name="Villen J."/>
            <person name="Johnson A.D."/>
            <person name="Gygi S.P."/>
            <person name="Morgan D.O."/>
        </authorList>
    </citation>
    <scope>PHOSPHORYLATION [LARGE SCALE ANALYSIS] AT SER-152</scope>
    <scope>IDENTIFICATION BY MASS SPECTROMETRY [LARGE SCALE ANALYSIS]</scope>
</reference>
<reference key="7">
    <citation type="journal article" date="2012" name="Genetics">
        <title>A conserved transcriptional regulator governs fungal morphology in widely diverged species.</title>
        <authorList>
            <person name="Cain C.W."/>
            <person name="Lohse M.B."/>
            <person name="Homann O.R."/>
            <person name="Sil A."/>
            <person name="Johnson A.D."/>
        </authorList>
    </citation>
    <scope>FUNCTION</scope>
    <scope>DNA-BINDING</scope>
</reference>
<comment type="function">
    <text evidence="4">Transcriptional regulator of pseudohyphal growth.</text>
</comment>
<comment type="subcellular location">
    <subcellularLocation>
        <location evidence="2">Cytoplasm</location>
    </subcellularLocation>
    <subcellularLocation>
        <location evidence="2">Nucleus</location>
    </subcellularLocation>
</comment>
<comment type="miscellaneous">
    <text evidence="3">Present with 1710 molecules/cell in log phase SD medium.</text>
</comment>
<comment type="similarity">
    <text evidence="5">Belongs to the MIT1/WOR1 family.</text>
</comment>
<protein>
    <recommendedName>
        <fullName>Transcriptional regulator MIT1</fullName>
    </recommendedName>
</protein>
<proteinExistence type="evidence at protein level"/>
<name>MIT1_YEAST</name>
<feature type="chain" id="PRO_0000202617" description="Transcriptional regulator MIT1">
    <location>
        <begin position="1"/>
        <end position="666"/>
    </location>
</feature>
<feature type="region of interest" description="Disordered" evidence="1">
    <location>
        <begin position="90"/>
        <end position="157"/>
    </location>
</feature>
<feature type="region of interest" description="Disordered" evidence="1">
    <location>
        <begin position="232"/>
        <end position="254"/>
    </location>
</feature>
<feature type="region of interest" description="Disordered" evidence="1">
    <location>
        <begin position="314"/>
        <end position="389"/>
    </location>
</feature>
<feature type="region of interest" description="Disordered" evidence="1">
    <location>
        <begin position="425"/>
        <end position="479"/>
    </location>
</feature>
<feature type="region of interest" description="Disordered" evidence="1">
    <location>
        <begin position="528"/>
        <end position="552"/>
    </location>
</feature>
<feature type="compositionally biased region" description="Low complexity" evidence="1">
    <location>
        <begin position="90"/>
        <end position="104"/>
    </location>
</feature>
<feature type="compositionally biased region" description="Polar residues" evidence="1">
    <location>
        <begin position="108"/>
        <end position="121"/>
    </location>
</feature>
<feature type="compositionally biased region" description="Polar residues" evidence="1">
    <location>
        <begin position="139"/>
        <end position="157"/>
    </location>
</feature>
<feature type="compositionally biased region" description="Low complexity" evidence="1">
    <location>
        <begin position="233"/>
        <end position="254"/>
    </location>
</feature>
<feature type="compositionally biased region" description="Polar residues" evidence="1">
    <location>
        <begin position="314"/>
        <end position="333"/>
    </location>
</feature>
<feature type="compositionally biased region" description="Low complexity" evidence="1">
    <location>
        <begin position="334"/>
        <end position="384"/>
    </location>
</feature>
<feature type="compositionally biased region" description="Polar residues" evidence="1">
    <location>
        <begin position="436"/>
        <end position="451"/>
    </location>
</feature>
<feature type="compositionally biased region" description="Low complexity" evidence="1">
    <location>
        <begin position="460"/>
        <end position="476"/>
    </location>
</feature>
<feature type="compositionally biased region" description="Polar residues" evidence="1">
    <location>
        <begin position="530"/>
        <end position="552"/>
    </location>
</feature>
<feature type="modified residue" description="Phosphoserine" evidence="6">
    <location>
        <position position="152"/>
    </location>
</feature>